<gene>
    <name evidence="1" type="primary">rplP</name>
    <name type="ordered locus">Acid345_1233</name>
</gene>
<protein>
    <recommendedName>
        <fullName evidence="1">Large ribosomal subunit protein uL16</fullName>
    </recommendedName>
    <alternativeName>
        <fullName evidence="2">50S ribosomal protein L16</fullName>
    </alternativeName>
</protein>
<proteinExistence type="inferred from homology"/>
<comment type="function">
    <text evidence="1">Binds 23S rRNA and is also seen to make contacts with the A and possibly P site tRNAs.</text>
</comment>
<comment type="subunit">
    <text evidence="1">Part of the 50S ribosomal subunit.</text>
</comment>
<comment type="similarity">
    <text evidence="1">Belongs to the universal ribosomal protein uL16 family.</text>
</comment>
<feature type="chain" id="PRO_0000251612" description="Large ribosomal subunit protein uL16">
    <location>
        <begin position="1"/>
        <end position="139"/>
    </location>
</feature>
<name>RL16_KORVE</name>
<organism>
    <name type="scientific">Koribacter versatilis (strain Ellin345)</name>
    <dbReference type="NCBI Taxonomy" id="204669"/>
    <lineage>
        <taxon>Bacteria</taxon>
        <taxon>Pseudomonadati</taxon>
        <taxon>Acidobacteriota</taxon>
        <taxon>Terriglobia</taxon>
        <taxon>Terriglobales</taxon>
        <taxon>Candidatus Korobacteraceae</taxon>
        <taxon>Candidatus Korobacter</taxon>
    </lineage>
</organism>
<dbReference type="EMBL" id="CP000360">
    <property type="protein sequence ID" value="ABF40235.1"/>
    <property type="molecule type" value="Genomic_DNA"/>
</dbReference>
<dbReference type="RefSeq" id="WP_011522037.1">
    <property type="nucleotide sequence ID" value="NC_008009.1"/>
</dbReference>
<dbReference type="SMR" id="Q1ISB5"/>
<dbReference type="STRING" id="204669.Acid345_1233"/>
<dbReference type="EnsemblBacteria" id="ABF40235">
    <property type="protein sequence ID" value="ABF40235"/>
    <property type="gene ID" value="Acid345_1233"/>
</dbReference>
<dbReference type="KEGG" id="aba:Acid345_1233"/>
<dbReference type="eggNOG" id="COG0197">
    <property type="taxonomic scope" value="Bacteria"/>
</dbReference>
<dbReference type="HOGENOM" id="CLU_078858_2_1_0"/>
<dbReference type="OrthoDB" id="9802589at2"/>
<dbReference type="Proteomes" id="UP000002432">
    <property type="component" value="Chromosome"/>
</dbReference>
<dbReference type="GO" id="GO:0022625">
    <property type="term" value="C:cytosolic large ribosomal subunit"/>
    <property type="evidence" value="ECO:0007669"/>
    <property type="project" value="TreeGrafter"/>
</dbReference>
<dbReference type="GO" id="GO:0019843">
    <property type="term" value="F:rRNA binding"/>
    <property type="evidence" value="ECO:0007669"/>
    <property type="project" value="UniProtKB-UniRule"/>
</dbReference>
<dbReference type="GO" id="GO:0003735">
    <property type="term" value="F:structural constituent of ribosome"/>
    <property type="evidence" value="ECO:0007669"/>
    <property type="project" value="InterPro"/>
</dbReference>
<dbReference type="GO" id="GO:0000049">
    <property type="term" value="F:tRNA binding"/>
    <property type="evidence" value="ECO:0007669"/>
    <property type="project" value="UniProtKB-KW"/>
</dbReference>
<dbReference type="GO" id="GO:0006412">
    <property type="term" value="P:translation"/>
    <property type="evidence" value="ECO:0007669"/>
    <property type="project" value="UniProtKB-UniRule"/>
</dbReference>
<dbReference type="CDD" id="cd01433">
    <property type="entry name" value="Ribosomal_L16_L10e"/>
    <property type="match status" value="1"/>
</dbReference>
<dbReference type="FunFam" id="3.90.1170.10:FF:000001">
    <property type="entry name" value="50S ribosomal protein L16"/>
    <property type="match status" value="1"/>
</dbReference>
<dbReference type="Gene3D" id="3.90.1170.10">
    <property type="entry name" value="Ribosomal protein L10e/L16"/>
    <property type="match status" value="1"/>
</dbReference>
<dbReference type="HAMAP" id="MF_01342">
    <property type="entry name" value="Ribosomal_uL16"/>
    <property type="match status" value="1"/>
</dbReference>
<dbReference type="InterPro" id="IPR047873">
    <property type="entry name" value="Ribosomal_uL16"/>
</dbReference>
<dbReference type="InterPro" id="IPR000114">
    <property type="entry name" value="Ribosomal_uL16_bact-type"/>
</dbReference>
<dbReference type="InterPro" id="IPR020798">
    <property type="entry name" value="Ribosomal_uL16_CS"/>
</dbReference>
<dbReference type="InterPro" id="IPR016180">
    <property type="entry name" value="Ribosomal_uL16_dom"/>
</dbReference>
<dbReference type="InterPro" id="IPR036920">
    <property type="entry name" value="Ribosomal_uL16_sf"/>
</dbReference>
<dbReference type="NCBIfam" id="TIGR01164">
    <property type="entry name" value="rplP_bact"/>
    <property type="match status" value="1"/>
</dbReference>
<dbReference type="PANTHER" id="PTHR12220">
    <property type="entry name" value="50S/60S RIBOSOMAL PROTEIN L16"/>
    <property type="match status" value="1"/>
</dbReference>
<dbReference type="PANTHER" id="PTHR12220:SF13">
    <property type="entry name" value="LARGE RIBOSOMAL SUBUNIT PROTEIN UL16M"/>
    <property type="match status" value="1"/>
</dbReference>
<dbReference type="Pfam" id="PF00252">
    <property type="entry name" value="Ribosomal_L16"/>
    <property type="match status" value="1"/>
</dbReference>
<dbReference type="PRINTS" id="PR00060">
    <property type="entry name" value="RIBOSOMALL16"/>
</dbReference>
<dbReference type="SUPFAM" id="SSF54686">
    <property type="entry name" value="Ribosomal protein L16p/L10e"/>
    <property type="match status" value="1"/>
</dbReference>
<dbReference type="PROSITE" id="PS00586">
    <property type="entry name" value="RIBOSOMAL_L16_1"/>
    <property type="match status" value="1"/>
</dbReference>
<dbReference type="PROSITE" id="PS00701">
    <property type="entry name" value="RIBOSOMAL_L16_2"/>
    <property type="match status" value="1"/>
</dbReference>
<sequence length="139" mass="15786">MLMPKKVKYRKQQRGRMRGKAWRGSELSFGDFGLKVLEPGWISDRQIEASRVAMTRFIKRGGKIWIRLFPDKPVTKKPAETRMGKGKGAPDHWVAVVRPGKILFEMEGVSVTDAAEAMRLAAHKLPLRTKFVARETSAH</sequence>
<accession>Q1ISB5</accession>
<reference key="1">
    <citation type="journal article" date="2009" name="Appl. Environ. Microbiol.">
        <title>Three genomes from the phylum Acidobacteria provide insight into the lifestyles of these microorganisms in soils.</title>
        <authorList>
            <person name="Ward N.L."/>
            <person name="Challacombe J.F."/>
            <person name="Janssen P.H."/>
            <person name="Henrissat B."/>
            <person name="Coutinho P.M."/>
            <person name="Wu M."/>
            <person name="Xie G."/>
            <person name="Haft D.H."/>
            <person name="Sait M."/>
            <person name="Badger J."/>
            <person name="Barabote R.D."/>
            <person name="Bradley B."/>
            <person name="Brettin T.S."/>
            <person name="Brinkac L.M."/>
            <person name="Bruce D."/>
            <person name="Creasy T."/>
            <person name="Daugherty S.C."/>
            <person name="Davidsen T.M."/>
            <person name="DeBoy R.T."/>
            <person name="Detter J.C."/>
            <person name="Dodson R.J."/>
            <person name="Durkin A.S."/>
            <person name="Ganapathy A."/>
            <person name="Gwinn-Giglio M."/>
            <person name="Han C.S."/>
            <person name="Khouri H."/>
            <person name="Kiss H."/>
            <person name="Kothari S.P."/>
            <person name="Madupu R."/>
            <person name="Nelson K.E."/>
            <person name="Nelson W.C."/>
            <person name="Paulsen I."/>
            <person name="Penn K."/>
            <person name="Ren Q."/>
            <person name="Rosovitz M.J."/>
            <person name="Selengut J.D."/>
            <person name="Shrivastava S."/>
            <person name="Sullivan S.A."/>
            <person name="Tapia R."/>
            <person name="Thompson L.S."/>
            <person name="Watkins K.L."/>
            <person name="Yang Q."/>
            <person name="Yu C."/>
            <person name="Zafar N."/>
            <person name="Zhou L."/>
            <person name="Kuske C.R."/>
        </authorList>
    </citation>
    <scope>NUCLEOTIDE SEQUENCE [LARGE SCALE GENOMIC DNA]</scope>
    <source>
        <strain>Ellin345</strain>
    </source>
</reference>
<evidence type="ECO:0000255" key="1">
    <source>
        <dbReference type="HAMAP-Rule" id="MF_01342"/>
    </source>
</evidence>
<evidence type="ECO:0000305" key="2"/>
<keyword id="KW-1185">Reference proteome</keyword>
<keyword id="KW-0687">Ribonucleoprotein</keyword>
<keyword id="KW-0689">Ribosomal protein</keyword>
<keyword id="KW-0694">RNA-binding</keyword>
<keyword id="KW-0699">rRNA-binding</keyword>
<keyword id="KW-0820">tRNA-binding</keyword>